<proteinExistence type="evidence at protein level"/>
<dbReference type="EMBL" id="AK142302">
    <property type="protein sequence ID" value="BAE25021.1"/>
    <property type="molecule type" value="mRNA"/>
</dbReference>
<dbReference type="EMBL" id="AK159415">
    <property type="protein sequence ID" value="BAE35063.1"/>
    <property type="molecule type" value="mRNA"/>
</dbReference>
<dbReference type="EMBL" id="BC054083">
    <property type="protein sequence ID" value="AAH54083.1"/>
    <property type="molecule type" value="mRNA"/>
</dbReference>
<dbReference type="CCDS" id="CCDS15237.1"/>
<dbReference type="RefSeq" id="NP_001020327.1">
    <property type="nucleotide sequence ID" value="NM_001025156.2"/>
</dbReference>
<dbReference type="SMR" id="Q7TQK5"/>
<dbReference type="BioGRID" id="214279">
    <property type="interactions" value="7"/>
</dbReference>
<dbReference type="FunCoup" id="Q7TQK5">
    <property type="interactions" value="3981"/>
</dbReference>
<dbReference type="IntAct" id="Q7TQK5">
    <property type="interactions" value="2"/>
</dbReference>
<dbReference type="STRING" id="10090.ENSMUSP00000043442"/>
<dbReference type="iPTMnet" id="Q7TQK5"/>
<dbReference type="PhosphoSitePlus" id="Q7TQK5"/>
<dbReference type="jPOST" id="Q7TQK5"/>
<dbReference type="PaxDb" id="10090-ENSMUSP00000043442"/>
<dbReference type="PeptideAtlas" id="Q7TQK5"/>
<dbReference type="ProteomicsDB" id="265605"/>
<dbReference type="Pumba" id="Q7TQK5"/>
<dbReference type="Antibodypedia" id="33361">
    <property type="antibodies" value="249 antibodies from 19 providers"/>
</dbReference>
<dbReference type="Ensembl" id="ENSMUST00000036025.16">
    <property type="protein sequence ID" value="ENSMUSP00000043442.10"/>
    <property type="gene ID" value="ENSMUSG00000026339.19"/>
</dbReference>
<dbReference type="GeneID" id="70829"/>
<dbReference type="KEGG" id="mmu:70829"/>
<dbReference type="UCSC" id="uc007cju.2">
    <property type="organism name" value="mouse"/>
</dbReference>
<dbReference type="AGR" id="MGI:1918079"/>
<dbReference type="CTD" id="54520"/>
<dbReference type="MGI" id="MGI:1918079">
    <property type="gene designation" value="Ccdc93"/>
</dbReference>
<dbReference type="VEuPathDB" id="HostDB:ENSMUSG00000026339"/>
<dbReference type="eggNOG" id="KOG2701">
    <property type="taxonomic scope" value="Eukaryota"/>
</dbReference>
<dbReference type="GeneTree" id="ENSGT00390000011294"/>
<dbReference type="InParanoid" id="Q7TQK5"/>
<dbReference type="OMA" id="YERQEAP"/>
<dbReference type="OrthoDB" id="16092at2759"/>
<dbReference type="PhylomeDB" id="Q7TQK5"/>
<dbReference type="TreeFam" id="TF323318"/>
<dbReference type="BioGRID-ORCS" id="70829">
    <property type="hits" value="11 hits in 77 CRISPR screens"/>
</dbReference>
<dbReference type="ChiTaRS" id="Ccdc93">
    <property type="organism name" value="mouse"/>
</dbReference>
<dbReference type="PRO" id="PR:Q7TQK5"/>
<dbReference type="Proteomes" id="UP000000589">
    <property type="component" value="Chromosome 1"/>
</dbReference>
<dbReference type="RNAct" id="Q7TQK5">
    <property type="molecule type" value="protein"/>
</dbReference>
<dbReference type="Bgee" id="ENSMUSG00000026339">
    <property type="expression patterns" value="Expressed in iris and 243 other cell types or tissues"/>
</dbReference>
<dbReference type="ExpressionAtlas" id="Q7TQK5">
    <property type="expression patterns" value="baseline and differential"/>
</dbReference>
<dbReference type="GO" id="GO:0005769">
    <property type="term" value="C:early endosome"/>
    <property type="evidence" value="ECO:0007669"/>
    <property type="project" value="UniProtKB-SubCell"/>
</dbReference>
<dbReference type="GO" id="GO:0032456">
    <property type="term" value="P:endocytic recycling"/>
    <property type="evidence" value="ECO:0000250"/>
    <property type="project" value="UniProtKB"/>
</dbReference>
<dbReference type="GO" id="GO:0006893">
    <property type="term" value="P:Golgi to plasma membrane transport"/>
    <property type="evidence" value="ECO:0007669"/>
    <property type="project" value="Ensembl"/>
</dbReference>
<dbReference type="GO" id="GO:0015031">
    <property type="term" value="P:protein transport"/>
    <property type="evidence" value="ECO:0007669"/>
    <property type="project" value="UniProtKB-KW"/>
</dbReference>
<dbReference type="InterPro" id="IPR039116">
    <property type="entry name" value="CCDC93"/>
</dbReference>
<dbReference type="InterPro" id="IPR019159">
    <property type="entry name" value="CCDC93_CC"/>
</dbReference>
<dbReference type="InterPro" id="IPR048747">
    <property type="entry name" value="CCDC93_N"/>
</dbReference>
<dbReference type="PANTHER" id="PTHR16441:SF0">
    <property type="entry name" value="COILED-COIL DOMAIN-CONTAINING PROTEIN 93"/>
    <property type="match status" value="1"/>
</dbReference>
<dbReference type="PANTHER" id="PTHR16441">
    <property type="entry name" value="FIDIPIDINE"/>
    <property type="match status" value="1"/>
</dbReference>
<dbReference type="Pfam" id="PF09762">
    <property type="entry name" value="CCDC93_CC"/>
    <property type="match status" value="1"/>
</dbReference>
<dbReference type="Pfam" id="PF21673">
    <property type="entry name" value="CCDC93_N"/>
    <property type="match status" value="1"/>
</dbReference>
<protein>
    <recommendedName>
        <fullName>Coiled-coil domain-containing protein 93</fullName>
    </recommendedName>
</protein>
<accession>Q7TQK5</accession>
<accession>Q3TX53</accession>
<name>CCD93_MOUSE</name>
<organism>
    <name type="scientific">Mus musculus</name>
    <name type="common">Mouse</name>
    <dbReference type="NCBI Taxonomy" id="10090"/>
    <lineage>
        <taxon>Eukaryota</taxon>
        <taxon>Metazoa</taxon>
        <taxon>Chordata</taxon>
        <taxon>Craniata</taxon>
        <taxon>Vertebrata</taxon>
        <taxon>Euteleostomi</taxon>
        <taxon>Mammalia</taxon>
        <taxon>Eutheria</taxon>
        <taxon>Euarchontoglires</taxon>
        <taxon>Glires</taxon>
        <taxon>Rodentia</taxon>
        <taxon>Myomorpha</taxon>
        <taxon>Muroidea</taxon>
        <taxon>Muridae</taxon>
        <taxon>Murinae</taxon>
        <taxon>Mus</taxon>
        <taxon>Mus</taxon>
    </lineage>
</organism>
<gene>
    <name type="primary">Ccdc93</name>
</gene>
<feature type="chain" id="PRO_0000234605" description="Coiled-coil domain-containing protein 93">
    <location>
        <begin position="1"/>
        <end position="629"/>
    </location>
</feature>
<feature type="region of interest" description="Sufficient for interaction with CCDC22" evidence="1">
    <location>
        <begin position="1"/>
        <end position="428"/>
    </location>
</feature>
<feature type="region of interest" description="Disordered" evidence="3">
    <location>
        <begin position="1"/>
        <end position="23"/>
    </location>
</feature>
<feature type="region of interest" description="Sufficient for interaction with WASHC2C" evidence="1">
    <location>
        <begin position="446"/>
        <end position="629"/>
    </location>
</feature>
<feature type="coiled-coil region" evidence="2">
    <location>
        <begin position="231"/>
        <end position="430"/>
    </location>
</feature>
<feature type="coiled-coil region" evidence="2">
    <location>
        <begin position="558"/>
        <end position="599"/>
    </location>
</feature>
<feature type="modified residue" description="Phosphoserine" evidence="1">
    <location>
        <position position="298"/>
    </location>
</feature>
<feature type="modified residue" description="Phosphoserine" evidence="1">
    <location>
        <position position="301"/>
    </location>
</feature>
<feature type="modified residue" description="Phosphoserine" evidence="1">
    <location>
        <position position="305"/>
    </location>
</feature>
<feature type="sequence conflict" description="In Ref. 1; BAE35063." evidence="4" ref="1">
    <original>H</original>
    <variation>L</variation>
    <location>
        <position position="106"/>
    </location>
</feature>
<feature type="sequence conflict" description="In Ref. 1; BAE35063." evidence="4" ref="1">
    <original>Y</original>
    <variation>N</variation>
    <location>
        <position position="293"/>
    </location>
</feature>
<keyword id="KW-0175">Coiled coil</keyword>
<keyword id="KW-0967">Endosome</keyword>
<keyword id="KW-0597">Phosphoprotein</keyword>
<keyword id="KW-0653">Protein transport</keyword>
<keyword id="KW-1185">Reference proteome</keyword>
<keyword id="KW-0813">Transport</keyword>
<evidence type="ECO:0000250" key="1">
    <source>
        <dbReference type="UniProtKB" id="Q567U6"/>
    </source>
</evidence>
<evidence type="ECO:0000255" key="2"/>
<evidence type="ECO:0000256" key="3">
    <source>
        <dbReference type="SAM" id="MobiDB-lite"/>
    </source>
</evidence>
<evidence type="ECO:0000305" key="4"/>
<reference key="1">
    <citation type="journal article" date="2005" name="Science">
        <title>The transcriptional landscape of the mammalian genome.</title>
        <authorList>
            <person name="Carninci P."/>
            <person name="Kasukawa T."/>
            <person name="Katayama S."/>
            <person name="Gough J."/>
            <person name="Frith M.C."/>
            <person name="Maeda N."/>
            <person name="Oyama R."/>
            <person name="Ravasi T."/>
            <person name="Lenhard B."/>
            <person name="Wells C."/>
            <person name="Kodzius R."/>
            <person name="Shimokawa K."/>
            <person name="Bajic V.B."/>
            <person name="Brenner S.E."/>
            <person name="Batalov S."/>
            <person name="Forrest A.R."/>
            <person name="Zavolan M."/>
            <person name="Davis M.J."/>
            <person name="Wilming L.G."/>
            <person name="Aidinis V."/>
            <person name="Allen J.E."/>
            <person name="Ambesi-Impiombato A."/>
            <person name="Apweiler R."/>
            <person name="Aturaliya R.N."/>
            <person name="Bailey T.L."/>
            <person name="Bansal M."/>
            <person name="Baxter L."/>
            <person name="Beisel K.W."/>
            <person name="Bersano T."/>
            <person name="Bono H."/>
            <person name="Chalk A.M."/>
            <person name="Chiu K.P."/>
            <person name="Choudhary V."/>
            <person name="Christoffels A."/>
            <person name="Clutterbuck D.R."/>
            <person name="Crowe M.L."/>
            <person name="Dalla E."/>
            <person name="Dalrymple B.P."/>
            <person name="de Bono B."/>
            <person name="Della Gatta G."/>
            <person name="di Bernardo D."/>
            <person name="Down T."/>
            <person name="Engstrom P."/>
            <person name="Fagiolini M."/>
            <person name="Faulkner G."/>
            <person name="Fletcher C.F."/>
            <person name="Fukushima T."/>
            <person name="Furuno M."/>
            <person name="Futaki S."/>
            <person name="Gariboldi M."/>
            <person name="Georgii-Hemming P."/>
            <person name="Gingeras T.R."/>
            <person name="Gojobori T."/>
            <person name="Green R.E."/>
            <person name="Gustincich S."/>
            <person name="Harbers M."/>
            <person name="Hayashi Y."/>
            <person name="Hensch T.K."/>
            <person name="Hirokawa N."/>
            <person name="Hill D."/>
            <person name="Huminiecki L."/>
            <person name="Iacono M."/>
            <person name="Ikeo K."/>
            <person name="Iwama A."/>
            <person name="Ishikawa T."/>
            <person name="Jakt M."/>
            <person name="Kanapin A."/>
            <person name="Katoh M."/>
            <person name="Kawasawa Y."/>
            <person name="Kelso J."/>
            <person name="Kitamura H."/>
            <person name="Kitano H."/>
            <person name="Kollias G."/>
            <person name="Krishnan S.P."/>
            <person name="Kruger A."/>
            <person name="Kummerfeld S.K."/>
            <person name="Kurochkin I.V."/>
            <person name="Lareau L.F."/>
            <person name="Lazarevic D."/>
            <person name="Lipovich L."/>
            <person name="Liu J."/>
            <person name="Liuni S."/>
            <person name="McWilliam S."/>
            <person name="Madan Babu M."/>
            <person name="Madera M."/>
            <person name="Marchionni L."/>
            <person name="Matsuda H."/>
            <person name="Matsuzawa S."/>
            <person name="Miki H."/>
            <person name="Mignone F."/>
            <person name="Miyake S."/>
            <person name="Morris K."/>
            <person name="Mottagui-Tabar S."/>
            <person name="Mulder N."/>
            <person name="Nakano N."/>
            <person name="Nakauchi H."/>
            <person name="Ng P."/>
            <person name="Nilsson R."/>
            <person name="Nishiguchi S."/>
            <person name="Nishikawa S."/>
            <person name="Nori F."/>
            <person name="Ohara O."/>
            <person name="Okazaki Y."/>
            <person name="Orlando V."/>
            <person name="Pang K.C."/>
            <person name="Pavan W.J."/>
            <person name="Pavesi G."/>
            <person name="Pesole G."/>
            <person name="Petrovsky N."/>
            <person name="Piazza S."/>
            <person name="Reed J."/>
            <person name="Reid J.F."/>
            <person name="Ring B.Z."/>
            <person name="Ringwald M."/>
            <person name="Rost B."/>
            <person name="Ruan Y."/>
            <person name="Salzberg S.L."/>
            <person name="Sandelin A."/>
            <person name="Schneider C."/>
            <person name="Schoenbach C."/>
            <person name="Sekiguchi K."/>
            <person name="Semple C.A."/>
            <person name="Seno S."/>
            <person name="Sessa L."/>
            <person name="Sheng Y."/>
            <person name="Shibata Y."/>
            <person name="Shimada H."/>
            <person name="Shimada K."/>
            <person name="Silva D."/>
            <person name="Sinclair B."/>
            <person name="Sperling S."/>
            <person name="Stupka E."/>
            <person name="Sugiura K."/>
            <person name="Sultana R."/>
            <person name="Takenaka Y."/>
            <person name="Taki K."/>
            <person name="Tammoja K."/>
            <person name="Tan S.L."/>
            <person name="Tang S."/>
            <person name="Taylor M.S."/>
            <person name="Tegner J."/>
            <person name="Teichmann S.A."/>
            <person name="Ueda H.R."/>
            <person name="van Nimwegen E."/>
            <person name="Verardo R."/>
            <person name="Wei C.L."/>
            <person name="Yagi K."/>
            <person name="Yamanishi H."/>
            <person name="Zabarovsky E."/>
            <person name="Zhu S."/>
            <person name="Zimmer A."/>
            <person name="Hide W."/>
            <person name="Bult C."/>
            <person name="Grimmond S.M."/>
            <person name="Teasdale R.D."/>
            <person name="Liu E.T."/>
            <person name="Brusic V."/>
            <person name="Quackenbush J."/>
            <person name="Wahlestedt C."/>
            <person name="Mattick J.S."/>
            <person name="Hume D.A."/>
            <person name="Kai C."/>
            <person name="Sasaki D."/>
            <person name="Tomaru Y."/>
            <person name="Fukuda S."/>
            <person name="Kanamori-Katayama M."/>
            <person name="Suzuki M."/>
            <person name="Aoki J."/>
            <person name="Arakawa T."/>
            <person name="Iida J."/>
            <person name="Imamura K."/>
            <person name="Itoh M."/>
            <person name="Kato T."/>
            <person name="Kawaji H."/>
            <person name="Kawagashira N."/>
            <person name="Kawashima T."/>
            <person name="Kojima M."/>
            <person name="Kondo S."/>
            <person name="Konno H."/>
            <person name="Nakano K."/>
            <person name="Ninomiya N."/>
            <person name="Nishio T."/>
            <person name="Okada M."/>
            <person name="Plessy C."/>
            <person name="Shibata K."/>
            <person name="Shiraki T."/>
            <person name="Suzuki S."/>
            <person name="Tagami M."/>
            <person name="Waki K."/>
            <person name="Watahiki A."/>
            <person name="Okamura-Oho Y."/>
            <person name="Suzuki H."/>
            <person name="Kawai J."/>
            <person name="Hayashizaki Y."/>
        </authorList>
    </citation>
    <scope>NUCLEOTIDE SEQUENCE [LARGE SCALE MRNA]</scope>
    <source>
        <strain>C57BL/6J</strain>
        <tissue>Heart</tissue>
    </source>
</reference>
<reference key="2">
    <citation type="journal article" date="2004" name="Genome Res.">
        <title>The status, quality, and expansion of the NIH full-length cDNA project: the Mammalian Gene Collection (MGC).</title>
        <authorList>
            <consortium name="The MGC Project Team"/>
        </authorList>
    </citation>
    <scope>NUCLEOTIDE SEQUENCE [LARGE SCALE MRNA]</scope>
    <source>
        <strain>C57BL/6J</strain>
        <tissue>Eye</tissue>
    </source>
</reference>
<reference key="3">
    <citation type="journal article" date="2010" name="Cell">
        <title>A tissue-specific atlas of mouse protein phosphorylation and expression.</title>
        <authorList>
            <person name="Huttlin E.L."/>
            <person name="Jedrychowski M.P."/>
            <person name="Elias J.E."/>
            <person name="Goswami T."/>
            <person name="Rad R."/>
            <person name="Beausoleil S.A."/>
            <person name="Villen J."/>
            <person name="Haas W."/>
            <person name="Sowa M.E."/>
            <person name="Gygi S.P."/>
        </authorList>
    </citation>
    <scope>IDENTIFICATION BY MASS SPECTROMETRY [LARGE SCALE ANALYSIS]</scope>
    <source>
        <tissue>Brain</tissue>
        <tissue>Brown adipose tissue</tissue>
        <tissue>Kidney</tissue>
        <tissue>Liver</tissue>
        <tissue>Lung</tissue>
        <tissue>Spleen</tissue>
        <tissue>Testis</tissue>
    </source>
</reference>
<sequence>MGLPKGPEGQGLPEVETREDEEQNVKLTEILELLVAAGYFRARIKGLSPFDKVVGGMTWCITTCSFDVDVDLLFQENSTIGQKIALSEKIVSVLPRMKCPHQLEPHQIQGMDFIHIFPVVQWLVKRAIETKEEMGDYIRSYSISQFQKTYSLPEDDDFIKRKDKAVKTVVGLSDAYKPRRKYRRQRGAEELPDEESRVHSTLLEYGRRYGFSRQSKTEKAEDKKTALAAGLSAAEKVDAHEEDELQAAEEQRIQSLMTKMTAMANEESRLTASSVGQIVGLCSEEIKQIVSEYAGKQSELSAEESPEKLGTSQLHQRKVISLNKQILQKSKHLEELQANHTSLKAKYSDRKKTLTELKDHGEKLDKEQAALEKLEAKADPSMLQNLRALVAMNESLKSQEQEFKAHCREEMARLQQEIETLKAERAPGEKIISGGEPQGALTSTMTHNEDLDRRYNMEKEKLYKIRLLQARRNREIAILHRKIDEVPSRAELIQYQKRFIELYRQISAVHKETKQFFTLYNTLDDKKVYLEKEISLLNSIHENFSQAMASPAARDQFLRQMEQIVEGIKQSRMKMEKKKQENKMRRDQLNDQYLELLEKQRLYFKTVKEFKEEGRKNELLLSKIKAKAS</sequence>
<comment type="function">
    <text evidence="1">Component of the commander complex that is essential for endosomal recycling of transmembrane cargos; the commander complex is composed of composed of the CCC subcomplex and the retriever subcomplex (By similarity). Component of the CCC complex, which is involved in the regulation of endosomal recycling of surface proteins, including integrins, signaling receptor and channels (By similarity). The CCC complex associates with SNX17, retriever and WASH complexes to prevent lysosomal degradation and promote cell surface recycling of numerous cargos such as integrins ITGA5:ITGB1 (By similarity). Involved in copper-dependent ATP7A trafficking between the trans-Golgi network and vesicles in the cell periphery; the function is proposed to depend on its association within the CCC complex and cooperation with the WASH complex on early endosomes and is dependent on its interaction with WASHC2C (By similarity).</text>
</comment>
<comment type="subunit">
    <text evidence="1">Component of the commander complex consisting of the CCC subcomplex and the retriever subcomplex (By similarity). Component of the CCC (COMMD/CCDC22/CCDC93) subcomplex consisting of COMMD1, COMMD2, COMMD3, COMMD4, COMMD5, COMMD6, COMMD7, COMMD8, COMMD9, COMMD10, CCDC22 and CCDC93 (By similarity). Forms a coiled-coil heterodimer with CCDC22; this heterodimer interacts with the guanine nucleotide exchange factor DENND10; the interaction is direct (By similarity). Interacts with WASHC1 (By similarity). Interacts directly with WASHC2C (By similarity). Interacts with SNX17 and SNX31 (By similarity).</text>
</comment>
<comment type="subcellular location">
    <subcellularLocation>
        <location evidence="1">Early endosome</location>
    </subcellularLocation>
</comment>
<comment type="similarity">
    <text evidence="4">Belongs to the CCDC93 family.</text>
</comment>